<name>TTCA_SHESR</name>
<proteinExistence type="inferred from homology"/>
<protein>
    <recommendedName>
        <fullName evidence="1">tRNA-cytidine(32) 2-sulfurtransferase</fullName>
        <ecNumber evidence="1">2.8.1.-</ecNumber>
    </recommendedName>
    <alternativeName>
        <fullName evidence="1">Two-thiocytidine biosynthesis protein A</fullName>
    </alternativeName>
    <alternativeName>
        <fullName evidence="1">tRNA 2-thiocytidine biosynthesis protein TtcA</fullName>
    </alternativeName>
</protein>
<reference key="1">
    <citation type="submission" date="2006-08" db="EMBL/GenBank/DDBJ databases">
        <title>Complete sequence of chromosome 1 of Shewanella sp. MR-7.</title>
        <authorList>
            <person name="Copeland A."/>
            <person name="Lucas S."/>
            <person name="Lapidus A."/>
            <person name="Barry K."/>
            <person name="Detter J.C."/>
            <person name="Glavina del Rio T."/>
            <person name="Hammon N."/>
            <person name="Israni S."/>
            <person name="Dalin E."/>
            <person name="Tice H."/>
            <person name="Pitluck S."/>
            <person name="Kiss H."/>
            <person name="Brettin T."/>
            <person name="Bruce D."/>
            <person name="Han C."/>
            <person name="Tapia R."/>
            <person name="Gilna P."/>
            <person name="Schmutz J."/>
            <person name="Larimer F."/>
            <person name="Land M."/>
            <person name="Hauser L."/>
            <person name="Kyrpides N."/>
            <person name="Mikhailova N."/>
            <person name="Nealson K."/>
            <person name="Konstantinidis K."/>
            <person name="Klappenbach J."/>
            <person name="Tiedje J."/>
            <person name="Richardson P."/>
        </authorList>
    </citation>
    <scope>NUCLEOTIDE SEQUENCE [LARGE SCALE GENOMIC DNA]</scope>
    <source>
        <strain>MR-7</strain>
    </source>
</reference>
<accession>Q0HVA7</accession>
<feature type="chain" id="PRO_0000348845" description="tRNA-cytidine(32) 2-sulfurtransferase">
    <location>
        <begin position="1"/>
        <end position="310"/>
    </location>
</feature>
<feature type="short sequence motif" description="PP-loop motif" evidence="1">
    <location>
        <begin position="45"/>
        <end position="50"/>
    </location>
</feature>
<feature type="binding site" evidence="1">
    <location>
        <position position="120"/>
    </location>
    <ligand>
        <name>[4Fe-4S] cluster</name>
        <dbReference type="ChEBI" id="CHEBI:49883"/>
    </ligand>
</feature>
<feature type="binding site" evidence="1">
    <location>
        <position position="123"/>
    </location>
    <ligand>
        <name>[4Fe-4S] cluster</name>
        <dbReference type="ChEBI" id="CHEBI:49883"/>
    </ligand>
</feature>
<feature type="binding site" evidence="1">
    <location>
        <position position="211"/>
    </location>
    <ligand>
        <name>[4Fe-4S] cluster</name>
        <dbReference type="ChEBI" id="CHEBI:49883"/>
    </ligand>
</feature>
<evidence type="ECO:0000255" key="1">
    <source>
        <dbReference type="HAMAP-Rule" id="MF_01850"/>
    </source>
</evidence>
<evidence type="ECO:0000305" key="2"/>
<dbReference type="EC" id="2.8.1.-" evidence="1"/>
<dbReference type="EMBL" id="CP000444">
    <property type="protein sequence ID" value="ABI42948.1"/>
    <property type="status" value="ALT_INIT"/>
    <property type="molecule type" value="Genomic_DNA"/>
</dbReference>
<dbReference type="SMR" id="Q0HVA7"/>
<dbReference type="KEGG" id="shm:Shewmr7_1959"/>
<dbReference type="HOGENOM" id="CLU_026481_0_0_6"/>
<dbReference type="GO" id="GO:0005737">
    <property type="term" value="C:cytoplasm"/>
    <property type="evidence" value="ECO:0007669"/>
    <property type="project" value="UniProtKB-SubCell"/>
</dbReference>
<dbReference type="GO" id="GO:0051539">
    <property type="term" value="F:4 iron, 4 sulfur cluster binding"/>
    <property type="evidence" value="ECO:0007669"/>
    <property type="project" value="UniProtKB-UniRule"/>
</dbReference>
<dbReference type="GO" id="GO:0005524">
    <property type="term" value="F:ATP binding"/>
    <property type="evidence" value="ECO:0007669"/>
    <property type="project" value="UniProtKB-UniRule"/>
</dbReference>
<dbReference type="GO" id="GO:0000287">
    <property type="term" value="F:magnesium ion binding"/>
    <property type="evidence" value="ECO:0007669"/>
    <property type="project" value="UniProtKB-UniRule"/>
</dbReference>
<dbReference type="GO" id="GO:0016783">
    <property type="term" value="F:sulfurtransferase activity"/>
    <property type="evidence" value="ECO:0007669"/>
    <property type="project" value="UniProtKB-UniRule"/>
</dbReference>
<dbReference type="GO" id="GO:0000049">
    <property type="term" value="F:tRNA binding"/>
    <property type="evidence" value="ECO:0007669"/>
    <property type="project" value="UniProtKB-KW"/>
</dbReference>
<dbReference type="GO" id="GO:0034227">
    <property type="term" value="P:tRNA thio-modification"/>
    <property type="evidence" value="ECO:0007669"/>
    <property type="project" value="UniProtKB-UniRule"/>
</dbReference>
<dbReference type="CDD" id="cd24138">
    <property type="entry name" value="TtcA-like"/>
    <property type="match status" value="1"/>
</dbReference>
<dbReference type="Gene3D" id="3.40.50.620">
    <property type="entry name" value="HUPs"/>
    <property type="match status" value="1"/>
</dbReference>
<dbReference type="HAMAP" id="MF_01850">
    <property type="entry name" value="TtcA"/>
    <property type="match status" value="1"/>
</dbReference>
<dbReference type="InterPro" id="IPR014729">
    <property type="entry name" value="Rossmann-like_a/b/a_fold"/>
</dbReference>
<dbReference type="InterPro" id="IPR011063">
    <property type="entry name" value="TilS/TtcA_N"/>
</dbReference>
<dbReference type="InterPro" id="IPR012089">
    <property type="entry name" value="tRNA_Cyd_32_2_STrfase"/>
</dbReference>
<dbReference type="InterPro" id="IPR035107">
    <property type="entry name" value="tRNA_thiolation_TtcA_Ctu1"/>
</dbReference>
<dbReference type="NCBIfam" id="NF007972">
    <property type="entry name" value="PRK10696.1"/>
    <property type="match status" value="1"/>
</dbReference>
<dbReference type="PANTHER" id="PTHR43686:SF1">
    <property type="entry name" value="AMINOTRAN_5 DOMAIN-CONTAINING PROTEIN"/>
    <property type="match status" value="1"/>
</dbReference>
<dbReference type="PANTHER" id="PTHR43686">
    <property type="entry name" value="SULFURTRANSFERASE-RELATED"/>
    <property type="match status" value="1"/>
</dbReference>
<dbReference type="Pfam" id="PF01171">
    <property type="entry name" value="ATP_bind_3"/>
    <property type="match status" value="1"/>
</dbReference>
<dbReference type="PIRSF" id="PIRSF004976">
    <property type="entry name" value="ATPase_YdaO"/>
    <property type="match status" value="1"/>
</dbReference>
<dbReference type="SUPFAM" id="SSF52402">
    <property type="entry name" value="Adenine nucleotide alpha hydrolases-like"/>
    <property type="match status" value="1"/>
</dbReference>
<comment type="function">
    <text evidence="1">Catalyzes the ATP-dependent 2-thiolation of cytidine in position 32 of tRNA, to form 2-thiocytidine (s(2)C32). The sulfur atoms are provided by the cysteine/cysteine desulfurase (IscS) system.</text>
</comment>
<comment type="catalytic activity">
    <reaction evidence="1">
        <text>cytidine(32) in tRNA + S-sulfanyl-L-cysteinyl-[cysteine desulfurase] + AH2 + ATP = 2-thiocytidine(32) in tRNA + L-cysteinyl-[cysteine desulfurase] + A + AMP + diphosphate + H(+)</text>
        <dbReference type="Rhea" id="RHEA:57048"/>
        <dbReference type="Rhea" id="RHEA-COMP:10288"/>
        <dbReference type="Rhea" id="RHEA-COMP:12157"/>
        <dbReference type="Rhea" id="RHEA-COMP:12158"/>
        <dbReference type="Rhea" id="RHEA-COMP:14821"/>
        <dbReference type="ChEBI" id="CHEBI:13193"/>
        <dbReference type="ChEBI" id="CHEBI:15378"/>
        <dbReference type="ChEBI" id="CHEBI:17499"/>
        <dbReference type="ChEBI" id="CHEBI:29950"/>
        <dbReference type="ChEBI" id="CHEBI:30616"/>
        <dbReference type="ChEBI" id="CHEBI:33019"/>
        <dbReference type="ChEBI" id="CHEBI:61963"/>
        <dbReference type="ChEBI" id="CHEBI:82748"/>
        <dbReference type="ChEBI" id="CHEBI:141453"/>
        <dbReference type="ChEBI" id="CHEBI:456215"/>
    </reaction>
    <physiologicalReaction direction="left-to-right" evidence="1">
        <dbReference type="Rhea" id="RHEA:57049"/>
    </physiologicalReaction>
</comment>
<comment type="cofactor">
    <cofactor evidence="1">
        <name>Mg(2+)</name>
        <dbReference type="ChEBI" id="CHEBI:18420"/>
    </cofactor>
</comment>
<comment type="cofactor">
    <cofactor evidence="1">
        <name>[4Fe-4S] cluster</name>
        <dbReference type="ChEBI" id="CHEBI:49883"/>
    </cofactor>
    <text evidence="1">Binds 1 [4Fe-4S] cluster per subunit. The cluster is chelated by three Cys residues, the fourth Fe has a free coordination site that may bind a sulfur atom transferred from the persulfide of IscS.</text>
</comment>
<comment type="pathway">
    <text evidence="1">tRNA modification.</text>
</comment>
<comment type="subunit">
    <text evidence="1">Homodimer.</text>
</comment>
<comment type="subcellular location">
    <subcellularLocation>
        <location evidence="1">Cytoplasm</location>
    </subcellularLocation>
</comment>
<comment type="miscellaneous">
    <text evidence="1">The thiolation reaction likely consists of two steps: a first activation step by ATP to form an adenylated intermediate of the target base of tRNA, and a second nucleophilic substitution step of the sulfur (S) atom supplied by the hydrosulfide attached to the Fe-S cluster.</text>
</comment>
<comment type="similarity">
    <text evidence="1">Belongs to the TtcA family.</text>
</comment>
<comment type="sequence caution" evidence="2">
    <conflict type="erroneous initiation">
        <sequence resource="EMBL-CDS" id="ABI42948"/>
    </conflict>
    <text>Extended N-terminus.</text>
</comment>
<gene>
    <name evidence="1" type="primary">ttcA</name>
    <name type="ordered locus">Shewmr7_1959</name>
</gene>
<keyword id="KW-0004">4Fe-4S</keyword>
<keyword id="KW-0067">ATP-binding</keyword>
<keyword id="KW-0963">Cytoplasm</keyword>
<keyword id="KW-0408">Iron</keyword>
<keyword id="KW-0411">Iron-sulfur</keyword>
<keyword id="KW-0460">Magnesium</keyword>
<keyword id="KW-0479">Metal-binding</keyword>
<keyword id="KW-0547">Nucleotide-binding</keyword>
<keyword id="KW-0694">RNA-binding</keyword>
<keyword id="KW-0808">Transferase</keyword>
<keyword id="KW-0819">tRNA processing</keyword>
<keyword id="KW-0820">tRNA-binding</keyword>
<organism>
    <name type="scientific">Shewanella sp. (strain MR-7)</name>
    <dbReference type="NCBI Taxonomy" id="60481"/>
    <lineage>
        <taxon>Bacteria</taxon>
        <taxon>Pseudomonadati</taxon>
        <taxon>Pseudomonadota</taxon>
        <taxon>Gammaproteobacteria</taxon>
        <taxon>Alteromonadales</taxon>
        <taxon>Shewanellaceae</taxon>
        <taxon>Shewanella</taxon>
    </lineage>
</organism>
<sequence>MPEELSKKQITRLNKLQKRLRREVGSAIADYNMIEDGDRVMCCLSGGKDSYAMLDILLNLQQRAPVQFEIIAVNLDQKQPGFPEHVLPAYLDSLNIPYHILEKDTYSIVKEKIPEGKTTCSLCSRLRRGTLYGFAQRIGATKIALGHHRDDIIETMFLNMFYGGKMKAMPPKLLSDDGANVVIRPLAYCREKDLEEYAELKKFPIIPCNLCGSQENLKRQAVKDMLNQWDRLYPGRIETIFTAMQNTAPSQGVDREQFDFVSLKRDPNAPMKGDVAEADLPAFDFLDIANSGHIDLDAAKRINIVNVYEA</sequence>